<keyword id="KW-0489">Methyltransferase</keyword>
<keyword id="KW-1185">Reference proteome</keyword>
<keyword id="KW-0949">S-adenosyl-L-methionine</keyword>
<keyword id="KW-0808">Transferase</keyword>
<keyword id="KW-0831">Ubiquinone biosynthesis</keyword>
<feature type="chain" id="PRO_1000081219" description="Ubiquinone biosynthesis O-methyltransferase">
    <location>
        <begin position="1"/>
        <end position="248"/>
    </location>
</feature>
<feature type="binding site" evidence="1">
    <location>
        <position position="40"/>
    </location>
    <ligand>
        <name>S-adenosyl-L-methionine</name>
        <dbReference type="ChEBI" id="CHEBI:59789"/>
    </ligand>
</feature>
<feature type="binding site" evidence="1">
    <location>
        <position position="71"/>
    </location>
    <ligand>
        <name>S-adenosyl-L-methionine</name>
        <dbReference type="ChEBI" id="CHEBI:59789"/>
    </ligand>
</feature>
<feature type="binding site" evidence="1">
    <location>
        <position position="92"/>
    </location>
    <ligand>
        <name>S-adenosyl-L-methionine</name>
        <dbReference type="ChEBI" id="CHEBI:59789"/>
    </ligand>
</feature>
<feature type="binding site" evidence="1">
    <location>
        <position position="135"/>
    </location>
    <ligand>
        <name>S-adenosyl-L-methionine</name>
        <dbReference type="ChEBI" id="CHEBI:59789"/>
    </ligand>
</feature>
<reference key="1">
    <citation type="journal article" date="2010" name="ISME J.">
        <title>The complete genome sequence of the algal symbiont Dinoroseobacter shibae: a hitchhiker's guide to life in the sea.</title>
        <authorList>
            <person name="Wagner-Dobler I."/>
            <person name="Ballhausen B."/>
            <person name="Berger M."/>
            <person name="Brinkhoff T."/>
            <person name="Buchholz I."/>
            <person name="Bunk B."/>
            <person name="Cypionka H."/>
            <person name="Daniel R."/>
            <person name="Drepper T."/>
            <person name="Gerdts G."/>
            <person name="Hahnke S."/>
            <person name="Han C."/>
            <person name="Jahn D."/>
            <person name="Kalhoefer D."/>
            <person name="Kiss H."/>
            <person name="Klenk H.P."/>
            <person name="Kyrpides N."/>
            <person name="Liebl W."/>
            <person name="Liesegang H."/>
            <person name="Meincke L."/>
            <person name="Pati A."/>
            <person name="Petersen J."/>
            <person name="Piekarski T."/>
            <person name="Pommerenke C."/>
            <person name="Pradella S."/>
            <person name="Pukall R."/>
            <person name="Rabus R."/>
            <person name="Stackebrandt E."/>
            <person name="Thole S."/>
            <person name="Thompson L."/>
            <person name="Tielen P."/>
            <person name="Tomasch J."/>
            <person name="von Jan M."/>
            <person name="Wanphrut N."/>
            <person name="Wichels A."/>
            <person name="Zech H."/>
            <person name="Simon M."/>
        </authorList>
    </citation>
    <scope>NUCLEOTIDE SEQUENCE [LARGE SCALE GENOMIC DNA]</scope>
    <source>
        <strain>DSM 16493 / NCIMB 14021 / DFL 12</strain>
    </source>
</reference>
<sequence>MTTNTQTVDTSELAKFEAMAAEWWDPMGKFRPLHLMNPVRLDYITRQIAAEYGRDLKSPNPFKGLRILDIGCGGGLLAEPMARLGATVVGADAAEGNLPVARLHAEKSGLEIDYRHTTAEALVAAGEQFDSVLNMEVVEHVADPLAYLTACKDLLKPGGIMLCSTLNRNPKSFAMAIVGAEYVLKWLPKGTHDWRKFLTPDELTKLLEQAGLEPVDKKGMVFNPLSQQWSLSDRDLSVNYVTASIRPA</sequence>
<dbReference type="EC" id="2.1.1.222" evidence="1"/>
<dbReference type="EC" id="2.1.1.64" evidence="1"/>
<dbReference type="EMBL" id="CP000830">
    <property type="protein sequence ID" value="ABV95283.1"/>
    <property type="molecule type" value="Genomic_DNA"/>
</dbReference>
<dbReference type="RefSeq" id="WP_012180206.1">
    <property type="nucleotide sequence ID" value="NC_009952.1"/>
</dbReference>
<dbReference type="SMR" id="A8LQ43"/>
<dbReference type="STRING" id="398580.Dshi_3550"/>
<dbReference type="KEGG" id="dsh:Dshi_3550"/>
<dbReference type="eggNOG" id="COG2227">
    <property type="taxonomic scope" value="Bacteria"/>
</dbReference>
<dbReference type="HOGENOM" id="CLU_042432_0_0_5"/>
<dbReference type="OrthoDB" id="9801538at2"/>
<dbReference type="UniPathway" id="UPA00232"/>
<dbReference type="Proteomes" id="UP000006833">
    <property type="component" value="Chromosome"/>
</dbReference>
<dbReference type="GO" id="GO:0102208">
    <property type="term" value="F:2-polyprenyl-6-hydroxyphenol methylase activity"/>
    <property type="evidence" value="ECO:0007669"/>
    <property type="project" value="UniProtKB-EC"/>
</dbReference>
<dbReference type="GO" id="GO:0061542">
    <property type="term" value="F:3-demethylubiquinol 3-O-methyltransferase activity"/>
    <property type="evidence" value="ECO:0007669"/>
    <property type="project" value="UniProtKB-UniRule"/>
</dbReference>
<dbReference type="GO" id="GO:0010420">
    <property type="term" value="F:polyprenyldihydroxybenzoate methyltransferase activity"/>
    <property type="evidence" value="ECO:0007669"/>
    <property type="project" value="InterPro"/>
</dbReference>
<dbReference type="GO" id="GO:0032259">
    <property type="term" value="P:methylation"/>
    <property type="evidence" value="ECO:0007669"/>
    <property type="project" value="UniProtKB-KW"/>
</dbReference>
<dbReference type="CDD" id="cd02440">
    <property type="entry name" value="AdoMet_MTases"/>
    <property type="match status" value="1"/>
</dbReference>
<dbReference type="Gene3D" id="3.40.50.150">
    <property type="entry name" value="Vaccinia Virus protein VP39"/>
    <property type="match status" value="1"/>
</dbReference>
<dbReference type="HAMAP" id="MF_00472">
    <property type="entry name" value="UbiG"/>
    <property type="match status" value="1"/>
</dbReference>
<dbReference type="InterPro" id="IPR029063">
    <property type="entry name" value="SAM-dependent_MTases_sf"/>
</dbReference>
<dbReference type="InterPro" id="IPR010233">
    <property type="entry name" value="UbiG_MeTrfase"/>
</dbReference>
<dbReference type="NCBIfam" id="TIGR01983">
    <property type="entry name" value="UbiG"/>
    <property type="match status" value="1"/>
</dbReference>
<dbReference type="PANTHER" id="PTHR43464">
    <property type="entry name" value="METHYLTRANSFERASE"/>
    <property type="match status" value="1"/>
</dbReference>
<dbReference type="PANTHER" id="PTHR43464:SF19">
    <property type="entry name" value="UBIQUINONE BIOSYNTHESIS O-METHYLTRANSFERASE, MITOCHONDRIAL"/>
    <property type="match status" value="1"/>
</dbReference>
<dbReference type="Pfam" id="PF13489">
    <property type="entry name" value="Methyltransf_23"/>
    <property type="match status" value="1"/>
</dbReference>
<dbReference type="SUPFAM" id="SSF53335">
    <property type="entry name" value="S-adenosyl-L-methionine-dependent methyltransferases"/>
    <property type="match status" value="1"/>
</dbReference>
<organism>
    <name type="scientific">Dinoroseobacter shibae (strain DSM 16493 / NCIMB 14021 / DFL 12)</name>
    <dbReference type="NCBI Taxonomy" id="398580"/>
    <lineage>
        <taxon>Bacteria</taxon>
        <taxon>Pseudomonadati</taxon>
        <taxon>Pseudomonadota</taxon>
        <taxon>Alphaproteobacteria</taxon>
        <taxon>Rhodobacterales</taxon>
        <taxon>Roseobacteraceae</taxon>
        <taxon>Dinoroseobacter</taxon>
    </lineage>
</organism>
<protein>
    <recommendedName>
        <fullName evidence="1">Ubiquinone biosynthesis O-methyltransferase</fullName>
    </recommendedName>
    <alternativeName>
        <fullName evidence="1">2-polyprenyl-6-hydroxyphenol methylase</fullName>
        <ecNumber evidence="1">2.1.1.222</ecNumber>
    </alternativeName>
    <alternativeName>
        <fullName evidence="1">3-demethylubiquinone 3-O-methyltransferase</fullName>
        <ecNumber evidence="1">2.1.1.64</ecNumber>
    </alternativeName>
</protein>
<proteinExistence type="inferred from homology"/>
<evidence type="ECO:0000255" key="1">
    <source>
        <dbReference type="HAMAP-Rule" id="MF_00472"/>
    </source>
</evidence>
<name>UBIG_DINSH</name>
<gene>
    <name evidence="1" type="primary">ubiG</name>
    <name type="ordered locus">Dshi_3550</name>
</gene>
<accession>A8LQ43</accession>
<comment type="function">
    <text evidence="1">O-methyltransferase that catalyzes the 2 O-methylation steps in the ubiquinone biosynthetic pathway.</text>
</comment>
<comment type="catalytic activity">
    <reaction evidence="1">
        <text>a 3-demethylubiquinol + S-adenosyl-L-methionine = a ubiquinol + S-adenosyl-L-homocysteine + H(+)</text>
        <dbReference type="Rhea" id="RHEA:44380"/>
        <dbReference type="Rhea" id="RHEA-COMP:9566"/>
        <dbReference type="Rhea" id="RHEA-COMP:10914"/>
        <dbReference type="ChEBI" id="CHEBI:15378"/>
        <dbReference type="ChEBI" id="CHEBI:17976"/>
        <dbReference type="ChEBI" id="CHEBI:57856"/>
        <dbReference type="ChEBI" id="CHEBI:59789"/>
        <dbReference type="ChEBI" id="CHEBI:84422"/>
        <dbReference type="EC" id="2.1.1.64"/>
    </reaction>
</comment>
<comment type="catalytic activity">
    <reaction evidence="1">
        <text>a 3-(all-trans-polyprenyl)benzene-1,2-diol + S-adenosyl-L-methionine = a 2-methoxy-6-(all-trans-polyprenyl)phenol + S-adenosyl-L-homocysteine + H(+)</text>
        <dbReference type="Rhea" id="RHEA:31411"/>
        <dbReference type="Rhea" id="RHEA-COMP:9550"/>
        <dbReference type="Rhea" id="RHEA-COMP:9551"/>
        <dbReference type="ChEBI" id="CHEBI:15378"/>
        <dbReference type="ChEBI" id="CHEBI:57856"/>
        <dbReference type="ChEBI" id="CHEBI:59789"/>
        <dbReference type="ChEBI" id="CHEBI:62729"/>
        <dbReference type="ChEBI" id="CHEBI:62731"/>
        <dbReference type="EC" id="2.1.1.222"/>
    </reaction>
</comment>
<comment type="pathway">
    <text evidence="1">Cofactor biosynthesis; ubiquinone biosynthesis.</text>
</comment>
<comment type="similarity">
    <text evidence="1">Belongs to the methyltransferase superfamily. UbiG/COQ3 family.</text>
</comment>